<organism>
    <name type="scientific">Pyrobaculum aerophilum (strain ATCC 51768 / DSM 7523 / JCM 9630 / CIP 104966 / NBRC 100827 / IM2)</name>
    <dbReference type="NCBI Taxonomy" id="178306"/>
    <lineage>
        <taxon>Archaea</taxon>
        <taxon>Thermoproteota</taxon>
        <taxon>Thermoprotei</taxon>
        <taxon>Thermoproteales</taxon>
        <taxon>Thermoproteaceae</taxon>
        <taxon>Pyrobaculum</taxon>
    </lineage>
</organism>
<gene>
    <name evidence="1" type="primary">rpl15</name>
    <name type="ordered locus">PAE3436</name>
</gene>
<sequence length="156" mass="17384">MVRRFKRGTKYRRGSRTHGWGRVGQHRKSGGSGGKGMVGFHKHKWSLVMKYGESGTGWPFYGKHGFKQPPPISIEWRPINVGTLAELVKELKAEGKVREEGGKYVINLLELGFNKLLGGGTIDLPVIVYTPIASRTAVEKIEKAGGEVRIIHVIHR</sequence>
<name>RL15_PYRAE</name>
<evidence type="ECO:0000255" key="1">
    <source>
        <dbReference type="HAMAP-Rule" id="MF_01341"/>
    </source>
</evidence>
<evidence type="ECO:0000256" key="2">
    <source>
        <dbReference type="SAM" id="MobiDB-lite"/>
    </source>
</evidence>
<evidence type="ECO:0000305" key="3"/>
<comment type="function">
    <text evidence="1">Binds to the 23S rRNA.</text>
</comment>
<comment type="subunit">
    <text evidence="1">Part of the 50S ribosomal subunit.</text>
</comment>
<comment type="similarity">
    <text evidence="1">Belongs to the universal ribosomal protein uL15 family.</text>
</comment>
<proteinExistence type="inferred from homology"/>
<keyword id="KW-1185">Reference proteome</keyword>
<keyword id="KW-0687">Ribonucleoprotein</keyword>
<keyword id="KW-0689">Ribosomal protein</keyword>
<keyword id="KW-0694">RNA-binding</keyword>
<keyword id="KW-0699">rRNA-binding</keyword>
<feature type="chain" id="PRO_0000104869" description="Large ribosomal subunit protein uL15">
    <location>
        <begin position="1"/>
        <end position="156"/>
    </location>
</feature>
<feature type="region of interest" description="Disordered" evidence="2">
    <location>
        <begin position="1"/>
        <end position="37"/>
    </location>
</feature>
<feature type="compositionally biased region" description="Basic residues" evidence="2">
    <location>
        <begin position="1"/>
        <end position="16"/>
    </location>
</feature>
<reference key="1">
    <citation type="journal article" date="2002" name="Proc. Natl. Acad. Sci. U.S.A.">
        <title>Genome sequence of the hyperthermophilic crenarchaeon Pyrobaculum aerophilum.</title>
        <authorList>
            <person name="Fitz-Gibbon S.T."/>
            <person name="Ladner H."/>
            <person name="Kim U.-J."/>
            <person name="Stetter K.O."/>
            <person name="Simon M.I."/>
            <person name="Miller J.H."/>
        </authorList>
    </citation>
    <scope>NUCLEOTIDE SEQUENCE [LARGE SCALE GENOMIC DNA]</scope>
    <source>
        <strain>ATCC 51768 / DSM 7523 / JCM 9630 / CIP 104966 / NBRC 100827 / IM2</strain>
    </source>
</reference>
<accession>Q8ZT50</accession>
<protein>
    <recommendedName>
        <fullName evidence="1">Large ribosomal subunit protein uL15</fullName>
    </recommendedName>
    <alternativeName>
        <fullName evidence="3">50S ribosomal protein L15</fullName>
    </alternativeName>
</protein>
<dbReference type="EMBL" id="AE009441">
    <property type="protein sequence ID" value="AAL64913.1"/>
    <property type="molecule type" value="Genomic_DNA"/>
</dbReference>
<dbReference type="RefSeq" id="WP_011009380.1">
    <property type="nucleotide sequence ID" value="NC_003364.1"/>
</dbReference>
<dbReference type="SMR" id="Q8ZT50"/>
<dbReference type="FunCoup" id="Q8ZT50">
    <property type="interactions" value="171"/>
</dbReference>
<dbReference type="STRING" id="178306.PAE3436"/>
<dbReference type="EnsemblBacteria" id="AAL64913">
    <property type="protein sequence ID" value="AAL64913"/>
    <property type="gene ID" value="PAE3436"/>
</dbReference>
<dbReference type="GeneID" id="1464110"/>
<dbReference type="KEGG" id="pai:PAE3436"/>
<dbReference type="PATRIC" id="fig|178306.9.peg.2584"/>
<dbReference type="eggNOG" id="arCOG00779">
    <property type="taxonomic scope" value="Archaea"/>
</dbReference>
<dbReference type="HOGENOM" id="CLU_109163_0_0_2"/>
<dbReference type="InParanoid" id="Q8ZT50"/>
<dbReference type="Proteomes" id="UP000002439">
    <property type="component" value="Chromosome"/>
</dbReference>
<dbReference type="GO" id="GO:0022625">
    <property type="term" value="C:cytosolic large ribosomal subunit"/>
    <property type="evidence" value="ECO:0000318"/>
    <property type="project" value="GO_Central"/>
</dbReference>
<dbReference type="GO" id="GO:0019843">
    <property type="term" value="F:rRNA binding"/>
    <property type="evidence" value="ECO:0007669"/>
    <property type="project" value="UniProtKB-UniRule"/>
</dbReference>
<dbReference type="GO" id="GO:0003735">
    <property type="term" value="F:structural constituent of ribosome"/>
    <property type="evidence" value="ECO:0000318"/>
    <property type="project" value="GO_Central"/>
</dbReference>
<dbReference type="GO" id="GO:0006412">
    <property type="term" value="P:translation"/>
    <property type="evidence" value="ECO:0007669"/>
    <property type="project" value="UniProtKB-UniRule"/>
</dbReference>
<dbReference type="FunFam" id="3.100.10.10:FF:000021">
    <property type="entry name" value="50S ribosomal protein L15"/>
    <property type="match status" value="1"/>
</dbReference>
<dbReference type="FunFam" id="4.10.990.10:FF:000001">
    <property type="entry name" value="50S ribosomal protein L15"/>
    <property type="match status" value="1"/>
</dbReference>
<dbReference type="Gene3D" id="3.100.10.10">
    <property type="match status" value="1"/>
</dbReference>
<dbReference type="Gene3D" id="4.10.990.10">
    <property type="match status" value="1"/>
</dbReference>
<dbReference type="HAMAP" id="MF_01341">
    <property type="entry name" value="Ribosomal_uL15"/>
    <property type="match status" value="1"/>
</dbReference>
<dbReference type="InterPro" id="IPR027386">
    <property type="entry name" value="Rbsml_uL15_N"/>
</dbReference>
<dbReference type="InterPro" id="IPR030878">
    <property type="entry name" value="Ribosomal_uL15"/>
</dbReference>
<dbReference type="InterPro" id="IPR021131">
    <property type="entry name" value="Ribosomal_uL15/eL18"/>
</dbReference>
<dbReference type="InterPro" id="IPR036227">
    <property type="entry name" value="Ribosomal_uL15/eL18_sf"/>
</dbReference>
<dbReference type="InterPro" id="IPR001196">
    <property type="entry name" value="Ribosomal_uL15_CS"/>
</dbReference>
<dbReference type="PANTHER" id="PTHR11721">
    <property type="entry name" value="60S RIBOSOMAL PROTEIN L27A"/>
    <property type="match status" value="1"/>
</dbReference>
<dbReference type="PANTHER" id="PTHR11721:SF3">
    <property type="entry name" value="LARGE RIBOSOMAL SUBUNIT PROTEIN UL15"/>
    <property type="match status" value="1"/>
</dbReference>
<dbReference type="Pfam" id="PF00828">
    <property type="entry name" value="Ribosomal_L27A"/>
    <property type="match status" value="1"/>
</dbReference>
<dbReference type="SUPFAM" id="SSF52080">
    <property type="entry name" value="Ribosomal proteins L15p and L18e"/>
    <property type="match status" value="1"/>
</dbReference>
<dbReference type="PROSITE" id="PS00475">
    <property type="entry name" value="RIBOSOMAL_L15"/>
    <property type="match status" value="1"/>
</dbReference>